<evidence type="ECO:0000255" key="1">
    <source>
        <dbReference type="HAMAP-Rule" id="MF_00120"/>
    </source>
</evidence>
<evidence type="ECO:0000305" key="2"/>
<accession>Q5HBG3</accession>
<accession>Q5FEE5</accession>
<gene>
    <name evidence="1" type="primary">gatA</name>
    <name type="ordered locus">Erum3670</name>
    <name type="ordered locus">ERWE_CDS_03780</name>
</gene>
<feature type="chain" id="PRO_0000241101" description="Glutamyl-tRNA(Gln) amidotransferase subunit A">
    <location>
        <begin position="1"/>
        <end position="487"/>
    </location>
</feature>
<feature type="active site" description="Charge relay system" evidence="1">
    <location>
        <position position="79"/>
    </location>
</feature>
<feature type="active site" description="Charge relay system" evidence="1">
    <location>
        <position position="158"/>
    </location>
</feature>
<feature type="active site" description="Acyl-ester intermediate" evidence="1">
    <location>
        <position position="182"/>
    </location>
</feature>
<proteinExistence type="inferred from homology"/>
<protein>
    <recommendedName>
        <fullName evidence="1">Glutamyl-tRNA(Gln) amidotransferase subunit A</fullName>
        <shortName evidence="1">Glu-ADT subunit A</shortName>
        <ecNumber evidence="1">6.3.5.7</ecNumber>
    </recommendedName>
</protein>
<reference key="1">
    <citation type="journal article" date="2005" name="Proc. Natl. Acad. Sci. U.S.A.">
        <title>The genome of the heartwater agent Ehrlichia ruminantium contains multiple tandem repeats of actively variable copy number.</title>
        <authorList>
            <person name="Collins N.E."/>
            <person name="Liebenberg J."/>
            <person name="de Villiers E.P."/>
            <person name="Brayton K.A."/>
            <person name="Louw E."/>
            <person name="Pretorius A."/>
            <person name="Faber F.E."/>
            <person name="van Heerden H."/>
            <person name="Josemans A."/>
            <person name="van Kleef M."/>
            <person name="Steyn H.C."/>
            <person name="van Strijp M.F."/>
            <person name="Zweygarth E."/>
            <person name="Jongejan F."/>
            <person name="Maillard J.C."/>
            <person name="Berthier D."/>
            <person name="Botha M."/>
            <person name="Joubert F."/>
            <person name="Corton C.H."/>
            <person name="Thomson N.R."/>
            <person name="Allsopp M.T."/>
            <person name="Allsopp B.A."/>
        </authorList>
    </citation>
    <scope>NUCLEOTIDE SEQUENCE [LARGE SCALE GENOMIC DNA]</scope>
    <source>
        <strain>Welgevonden</strain>
    </source>
</reference>
<reference key="2">
    <citation type="journal article" date="2006" name="J. Bacteriol.">
        <title>Comparative genomic analysis of three strains of Ehrlichia ruminantium reveals an active process of genome size plasticity.</title>
        <authorList>
            <person name="Frutos R."/>
            <person name="Viari A."/>
            <person name="Ferraz C."/>
            <person name="Morgat A."/>
            <person name="Eychenie S."/>
            <person name="Kandassamy Y."/>
            <person name="Chantal I."/>
            <person name="Bensaid A."/>
            <person name="Coissac E."/>
            <person name="Vachiery N."/>
            <person name="Demaille J."/>
            <person name="Martinez D."/>
        </authorList>
    </citation>
    <scope>NUCLEOTIDE SEQUENCE [LARGE SCALE GENOMIC DNA]</scope>
    <source>
        <strain>Welgevonden</strain>
    </source>
</reference>
<dbReference type="EC" id="6.3.5.7" evidence="1"/>
<dbReference type="EMBL" id="CR767821">
    <property type="protein sequence ID" value="CAH58088.1"/>
    <property type="molecule type" value="Genomic_DNA"/>
</dbReference>
<dbReference type="EMBL" id="CR925678">
    <property type="protein sequence ID" value="CAI26872.1"/>
    <property type="status" value="ALT_INIT"/>
    <property type="molecule type" value="Genomic_DNA"/>
</dbReference>
<dbReference type="RefSeq" id="WP_011155048.1">
    <property type="nucleotide sequence ID" value="NC_005295.2"/>
</dbReference>
<dbReference type="SMR" id="Q5HBG3"/>
<dbReference type="GeneID" id="33057478"/>
<dbReference type="KEGG" id="eru:Erum3670"/>
<dbReference type="KEGG" id="erw:ERWE_CDS_03780"/>
<dbReference type="eggNOG" id="COG0154">
    <property type="taxonomic scope" value="Bacteria"/>
</dbReference>
<dbReference type="HOGENOM" id="CLU_009600_0_3_5"/>
<dbReference type="Proteomes" id="UP000001021">
    <property type="component" value="Chromosome"/>
</dbReference>
<dbReference type="GO" id="GO:0030956">
    <property type="term" value="C:glutamyl-tRNA(Gln) amidotransferase complex"/>
    <property type="evidence" value="ECO:0007669"/>
    <property type="project" value="InterPro"/>
</dbReference>
<dbReference type="GO" id="GO:0005524">
    <property type="term" value="F:ATP binding"/>
    <property type="evidence" value="ECO:0007669"/>
    <property type="project" value="UniProtKB-KW"/>
</dbReference>
<dbReference type="GO" id="GO:0050567">
    <property type="term" value="F:glutaminyl-tRNA synthase (glutamine-hydrolyzing) activity"/>
    <property type="evidence" value="ECO:0007669"/>
    <property type="project" value="UniProtKB-UniRule"/>
</dbReference>
<dbReference type="GO" id="GO:0006412">
    <property type="term" value="P:translation"/>
    <property type="evidence" value="ECO:0007669"/>
    <property type="project" value="UniProtKB-UniRule"/>
</dbReference>
<dbReference type="Gene3D" id="3.90.1300.10">
    <property type="entry name" value="Amidase signature (AS) domain"/>
    <property type="match status" value="1"/>
</dbReference>
<dbReference type="HAMAP" id="MF_00120">
    <property type="entry name" value="GatA"/>
    <property type="match status" value="1"/>
</dbReference>
<dbReference type="InterPro" id="IPR000120">
    <property type="entry name" value="Amidase"/>
</dbReference>
<dbReference type="InterPro" id="IPR020556">
    <property type="entry name" value="Amidase_CS"/>
</dbReference>
<dbReference type="InterPro" id="IPR023631">
    <property type="entry name" value="Amidase_dom"/>
</dbReference>
<dbReference type="InterPro" id="IPR036928">
    <property type="entry name" value="AS_sf"/>
</dbReference>
<dbReference type="InterPro" id="IPR004412">
    <property type="entry name" value="GatA"/>
</dbReference>
<dbReference type="NCBIfam" id="TIGR00132">
    <property type="entry name" value="gatA"/>
    <property type="match status" value="1"/>
</dbReference>
<dbReference type="PANTHER" id="PTHR11895:SF151">
    <property type="entry name" value="GLUTAMYL-TRNA(GLN) AMIDOTRANSFERASE SUBUNIT A"/>
    <property type="match status" value="1"/>
</dbReference>
<dbReference type="PANTHER" id="PTHR11895">
    <property type="entry name" value="TRANSAMIDASE"/>
    <property type="match status" value="1"/>
</dbReference>
<dbReference type="Pfam" id="PF01425">
    <property type="entry name" value="Amidase"/>
    <property type="match status" value="1"/>
</dbReference>
<dbReference type="SUPFAM" id="SSF75304">
    <property type="entry name" value="Amidase signature (AS) enzymes"/>
    <property type="match status" value="1"/>
</dbReference>
<dbReference type="PROSITE" id="PS00571">
    <property type="entry name" value="AMIDASES"/>
    <property type="match status" value="1"/>
</dbReference>
<sequence length="487" mass="53079">MKDILKLSIAEMHENLIKKEFSAVELTQTHIDAINNEQLNAFITKTPEVALDAARKADHILIHEQDKITPLTGIPVGIKDLFCTKNIKTTACSNILRNFTPQYDSTVVKRLIDDGAVMLGKLNMDEFAMGSSNSNSCFGPVENPWTRADGVKVVPGGSSGGSSAAVAGFLCAGALGSDTGGSVRQPAAFCGIVGLKPTYGRCSRLGMIAFASSLDQAGVLTRTVKDAALMLQPICGYDTQDSTSANITTPRFLDSITNIIKGKRIGIPKEYELSDKYKEYEEVSEMWLKGIKYLENEGAEIVNISLPHTSYALPVYYIICSAEASSNLARYDGIKYGTRVNSDNINEMYELTRGNNLGTEVKRRILIGAYALSSGYYDAYYNKAQCIRRLVTNDFVESFKSVDYILTPTAPKEAFAMDEQLDTLTMYLNDVFTVPASLAGLPAISIPIGLSKNKLPLSLQIIGNYYDEGGILNIASVIEKHTGNILK</sequence>
<keyword id="KW-0067">ATP-binding</keyword>
<keyword id="KW-0436">Ligase</keyword>
<keyword id="KW-0547">Nucleotide-binding</keyword>
<keyword id="KW-0648">Protein biosynthesis</keyword>
<name>GATA_EHRRW</name>
<organism>
    <name type="scientific">Ehrlichia ruminantium (strain Welgevonden)</name>
    <dbReference type="NCBI Taxonomy" id="254945"/>
    <lineage>
        <taxon>Bacteria</taxon>
        <taxon>Pseudomonadati</taxon>
        <taxon>Pseudomonadota</taxon>
        <taxon>Alphaproteobacteria</taxon>
        <taxon>Rickettsiales</taxon>
        <taxon>Anaplasmataceae</taxon>
        <taxon>Ehrlichia</taxon>
    </lineage>
</organism>
<comment type="function">
    <text evidence="1">Allows the formation of correctly charged Gln-tRNA(Gln) through the transamidation of misacylated Glu-tRNA(Gln) in organisms which lack glutaminyl-tRNA synthetase. The reaction takes place in the presence of glutamine and ATP through an activated gamma-phospho-Glu-tRNA(Gln).</text>
</comment>
<comment type="catalytic activity">
    <reaction evidence="1">
        <text>L-glutamyl-tRNA(Gln) + L-glutamine + ATP + H2O = L-glutaminyl-tRNA(Gln) + L-glutamate + ADP + phosphate + H(+)</text>
        <dbReference type="Rhea" id="RHEA:17521"/>
        <dbReference type="Rhea" id="RHEA-COMP:9681"/>
        <dbReference type="Rhea" id="RHEA-COMP:9684"/>
        <dbReference type="ChEBI" id="CHEBI:15377"/>
        <dbReference type="ChEBI" id="CHEBI:15378"/>
        <dbReference type="ChEBI" id="CHEBI:29985"/>
        <dbReference type="ChEBI" id="CHEBI:30616"/>
        <dbReference type="ChEBI" id="CHEBI:43474"/>
        <dbReference type="ChEBI" id="CHEBI:58359"/>
        <dbReference type="ChEBI" id="CHEBI:78520"/>
        <dbReference type="ChEBI" id="CHEBI:78521"/>
        <dbReference type="ChEBI" id="CHEBI:456216"/>
        <dbReference type="EC" id="6.3.5.7"/>
    </reaction>
</comment>
<comment type="subunit">
    <text evidence="1">Heterotrimer of A, B and C subunits.</text>
</comment>
<comment type="similarity">
    <text evidence="1">Belongs to the amidase family. GatA subfamily.</text>
</comment>
<comment type="sequence caution" evidence="2">
    <conflict type="erroneous initiation">
        <sequence resource="EMBL-CDS" id="CAI26872"/>
    </conflict>
</comment>